<name>NADD_YERPP</name>
<protein>
    <recommendedName>
        <fullName evidence="1">Probable nicotinate-nucleotide adenylyltransferase</fullName>
        <ecNumber evidence="1">2.7.7.18</ecNumber>
    </recommendedName>
    <alternativeName>
        <fullName evidence="1">Deamido-NAD(+) diphosphorylase</fullName>
    </alternativeName>
    <alternativeName>
        <fullName evidence="1">Deamido-NAD(+) pyrophosphorylase</fullName>
    </alternativeName>
    <alternativeName>
        <fullName evidence="1">Nicotinate mononucleotide adenylyltransferase</fullName>
        <shortName evidence="1">NaMN adenylyltransferase</shortName>
    </alternativeName>
</protein>
<accession>A4TP00</accession>
<proteinExistence type="inferred from homology"/>
<reference key="1">
    <citation type="submission" date="2007-02" db="EMBL/GenBank/DDBJ databases">
        <title>Complete sequence of chromosome of Yersinia pestis Pestoides F.</title>
        <authorList>
            <consortium name="US DOE Joint Genome Institute"/>
            <person name="Copeland A."/>
            <person name="Lucas S."/>
            <person name="Lapidus A."/>
            <person name="Barry K."/>
            <person name="Detter J.C."/>
            <person name="Glavina del Rio T."/>
            <person name="Hammon N."/>
            <person name="Israni S."/>
            <person name="Dalin E."/>
            <person name="Tice H."/>
            <person name="Pitluck S."/>
            <person name="Di Bartolo G."/>
            <person name="Chain P."/>
            <person name="Malfatti S."/>
            <person name="Shin M."/>
            <person name="Vergez L."/>
            <person name="Schmutz J."/>
            <person name="Larimer F."/>
            <person name="Land M."/>
            <person name="Hauser L."/>
            <person name="Worsham P."/>
            <person name="Chu M."/>
            <person name="Bearden S."/>
            <person name="Garcia E."/>
            <person name="Richardson P."/>
        </authorList>
    </citation>
    <scope>NUCLEOTIDE SEQUENCE [LARGE SCALE GENOMIC DNA]</scope>
    <source>
        <strain>Pestoides F</strain>
    </source>
</reference>
<organism>
    <name type="scientific">Yersinia pestis (strain Pestoides F)</name>
    <dbReference type="NCBI Taxonomy" id="386656"/>
    <lineage>
        <taxon>Bacteria</taxon>
        <taxon>Pseudomonadati</taxon>
        <taxon>Pseudomonadota</taxon>
        <taxon>Gammaproteobacteria</taxon>
        <taxon>Enterobacterales</taxon>
        <taxon>Yersiniaceae</taxon>
        <taxon>Yersinia</taxon>
    </lineage>
</organism>
<dbReference type="EC" id="2.7.7.18" evidence="1"/>
<dbReference type="EMBL" id="CP000668">
    <property type="protein sequence ID" value="ABP41012.1"/>
    <property type="molecule type" value="Genomic_DNA"/>
</dbReference>
<dbReference type="RefSeq" id="WP_002210330.1">
    <property type="nucleotide sequence ID" value="NZ_CP009715.1"/>
</dbReference>
<dbReference type="SMR" id="A4TP00"/>
<dbReference type="GeneID" id="57976088"/>
<dbReference type="KEGG" id="ypp:YPDSF_2646"/>
<dbReference type="PATRIC" id="fig|386656.14.peg.4173"/>
<dbReference type="UniPathway" id="UPA00253">
    <property type="reaction ID" value="UER00332"/>
</dbReference>
<dbReference type="GO" id="GO:0005524">
    <property type="term" value="F:ATP binding"/>
    <property type="evidence" value="ECO:0007669"/>
    <property type="project" value="UniProtKB-KW"/>
</dbReference>
<dbReference type="GO" id="GO:0004515">
    <property type="term" value="F:nicotinate-nucleotide adenylyltransferase activity"/>
    <property type="evidence" value="ECO:0007669"/>
    <property type="project" value="UniProtKB-UniRule"/>
</dbReference>
<dbReference type="GO" id="GO:0009435">
    <property type="term" value="P:NAD biosynthetic process"/>
    <property type="evidence" value="ECO:0007669"/>
    <property type="project" value="UniProtKB-UniRule"/>
</dbReference>
<dbReference type="CDD" id="cd02165">
    <property type="entry name" value="NMNAT"/>
    <property type="match status" value="1"/>
</dbReference>
<dbReference type="FunFam" id="3.40.50.620:FF:000039">
    <property type="entry name" value="Probable nicotinate-nucleotide adenylyltransferase"/>
    <property type="match status" value="1"/>
</dbReference>
<dbReference type="Gene3D" id="3.40.50.620">
    <property type="entry name" value="HUPs"/>
    <property type="match status" value="1"/>
</dbReference>
<dbReference type="HAMAP" id="MF_00244">
    <property type="entry name" value="NaMN_adenylyltr"/>
    <property type="match status" value="1"/>
</dbReference>
<dbReference type="InterPro" id="IPR004821">
    <property type="entry name" value="Cyt_trans-like"/>
</dbReference>
<dbReference type="InterPro" id="IPR005248">
    <property type="entry name" value="NadD/NMNAT"/>
</dbReference>
<dbReference type="InterPro" id="IPR014729">
    <property type="entry name" value="Rossmann-like_a/b/a_fold"/>
</dbReference>
<dbReference type="NCBIfam" id="TIGR00125">
    <property type="entry name" value="cyt_tran_rel"/>
    <property type="match status" value="1"/>
</dbReference>
<dbReference type="NCBIfam" id="TIGR00482">
    <property type="entry name" value="nicotinate (nicotinamide) nucleotide adenylyltransferase"/>
    <property type="match status" value="1"/>
</dbReference>
<dbReference type="NCBIfam" id="NF000839">
    <property type="entry name" value="PRK00071.1-1"/>
    <property type="match status" value="1"/>
</dbReference>
<dbReference type="NCBIfam" id="NF000840">
    <property type="entry name" value="PRK00071.1-3"/>
    <property type="match status" value="1"/>
</dbReference>
<dbReference type="PANTHER" id="PTHR39321">
    <property type="entry name" value="NICOTINATE-NUCLEOTIDE ADENYLYLTRANSFERASE-RELATED"/>
    <property type="match status" value="1"/>
</dbReference>
<dbReference type="PANTHER" id="PTHR39321:SF3">
    <property type="entry name" value="PHOSPHOPANTETHEINE ADENYLYLTRANSFERASE"/>
    <property type="match status" value="1"/>
</dbReference>
<dbReference type="Pfam" id="PF01467">
    <property type="entry name" value="CTP_transf_like"/>
    <property type="match status" value="1"/>
</dbReference>
<dbReference type="SUPFAM" id="SSF52374">
    <property type="entry name" value="Nucleotidylyl transferase"/>
    <property type="match status" value="1"/>
</dbReference>
<gene>
    <name evidence="1" type="primary">nadD</name>
    <name type="ordered locus">YPDSF_2646</name>
</gene>
<keyword id="KW-0067">ATP-binding</keyword>
<keyword id="KW-0520">NAD</keyword>
<keyword id="KW-0547">Nucleotide-binding</keyword>
<keyword id="KW-0548">Nucleotidyltransferase</keyword>
<keyword id="KW-0662">Pyridine nucleotide biosynthesis</keyword>
<keyword id="KW-0808">Transferase</keyword>
<evidence type="ECO:0000255" key="1">
    <source>
        <dbReference type="HAMAP-Rule" id="MF_00244"/>
    </source>
</evidence>
<sequence length="220" mass="24873">MPIKSSDHSLYALFGGTFDPIHYGHLKPVEALAQQVGLQHIILLPNHVPPHRPQPEANAQQRLKMVELAVAGNPLFSVDSRELLRDSPSFTIETLEALRKERGAEQPLAFIIGQDSLLSLHKWHRWQALLDVCHLLVCARPGYSQSLETPELQQWLESHKVMDPQALSQRPHGAIYLADTPLLDISATDIRRRRHNGESCDDLLPQAVQRYIELQGLYRG</sequence>
<comment type="function">
    <text evidence="1">Catalyzes the reversible adenylation of nicotinate mononucleotide (NaMN) to nicotinic acid adenine dinucleotide (NaAD).</text>
</comment>
<comment type="catalytic activity">
    <reaction evidence="1">
        <text>nicotinate beta-D-ribonucleotide + ATP + H(+) = deamido-NAD(+) + diphosphate</text>
        <dbReference type="Rhea" id="RHEA:22860"/>
        <dbReference type="ChEBI" id="CHEBI:15378"/>
        <dbReference type="ChEBI" id="CHEBI:30616"/>
        <dbReference type="ChEBI" id="CHEBI:33019"/>
        <dbReference type="ChEBI" id="CHEBI:57502"/>
        <dbReference type="ChEBI" id="CHEBI:58437"/>
        <dbReference type="EC" id="2.7.7.18"/>
    </reaction>
</comment>
<comment type="pathway">
    <text evidence="1">Cofactor biosynthesis; NAD(+) biosynthesis; deamido-NAD(+) from nicotinate D-ribonucleotide: step 1/1.</text>
</comment>
<comment type="similarity">
    <text evidence="1">Belongs to the NadD family.</text>
</comment>
<feature type="chain" id="PRO_0000310158" description="Probable nicotinate-nucleotide adenylyltransferase">
    <location>
        <begin position="1"/>
        <end position="220"/>
    </location>
</feature>